<name>APOC1_ZALCA</name>
<dbReference type="EMBL" id="PISZ01017283">
    <property type="status" value="NOT_ANNOTATED_CDS"/>
    <property type="molecule type" value="Genomic_DNA"/>
</dbReference>
<dbReference type="SMR" id="P0DTT5"/>
<dbReference type="Proteomes" id="UP000515165">
    <property type="component" value="Unplaced"/>
</dbReference>
<dbReference type="GO" id="GO:0034364">
    <property type="term" value="C:high-density lipoprotein particle"/>
    <property type="evidence" value="ECO:0007669"/>
    <property type="project" value="TreeGrafter"/>
</dbReference>
<dbReference type="GO" id="GO:0034361">
    <property type="term" value="C:very-low-density lipoprotein particle"/>
    <property type="evidence" value="ECO:0007669"/>
    <property type="project" value="UniProtKB-KW"/>
</dbReference>
<dbReference type="GO" id="GO:0005504">
    <property type="term" value="F:fatty acid binding"/>
    <property type="evidence" value="ECO:0007669"/>
    <property type="project" value="TreeGrafter"/>
</dbReference>
<dbReference type="GO" id="GO:0004859">
    <property type="term" value="F:phospholipase inhibitor activity"/>
    <property type="evidence" value="ECO:0007669"/>
    <property type="project" value="TreeGrafter"/>
</dbReference>
<dbReference type="GO" id="GO:0006869">
    <property type="term" value="P:lipid transport"/>
    <property type="evidence" value="ECO:0007669"/>
    <property type="project" value="UniProtKB-KW"/>
</dbReference>
<dbReference type="GO" id="GO:0042157">
    <property type="term" value="P:lipoprotein metabolic process"/>
    <property type="evidence" value="ECO:0007669"/>
    <property type="project" value="InterPro"/>
</dbReference>
<dbReference type="GO" id="GO:0032375">
    <property type="term" value="P:negative regulation of cholesterol transport"/>
    <property type="evidence" value="ECO:0007669"/>
    <property type="project" value="TreeGrafter"/>
</dbReference>
<dbReference type="GO" id="GO:0050995">
    <property type="term" value="P:negative regulation of lipid catabolic process"/>
    <property type="evidence" value="ECO:0007669"/>
    <property type="project" value="TreeGrafter"/>
</dbReference>
<dbReference type="GO" id="GO:0010916">
    <property type="term" value="P:negative regulation of very-low-density lipoprotein particle clearance"/>
    <property type="evidence" value="ECO:0007669"/>
    <property type="project" value="TreeGrafter"/>
</dbReference>
<dbReference type="GO" id="GO:0006641">
    <property type="term" value="P:triglyceride metabolic process"/>
    <property type="evidence" value="ECO:0007669"/>
    <property type="project" value="TreeGrafter"/>
</dbReference>
<dbReference type="GO" id="GO:0034447">
    <property type="term" value="P:very-low-density lipoprotein particle clearance"/>
    <property type="evidence" value="ECO:0007669"/>
    <property type="project" value="TreeGrafter"/>
</dbReference>
<dbReference type="Gene3D" id="4.10.260.30">
    <property type="entry name" value="Apolipoprotein C-I"/>
    <property type="match status" value="1"/>
</dbReference>
<dbReference type="InterPro" id="IPR043081">
    <property type="entry name" value="ApoC-1_sf"/>
</dbReference>
<dbReference type="InterPro" id="IPR006781">
    <property type="entry name" value="ApoC-I"/>
</dbReference>
<dbReference type="PANTHER" id="PTHR16565">
    <property type="entry name" value="APOLIPOPROTEIN C-I"/>
    <property type="match status" value="1"/>
</dbReference>
<dbReference type="PANTHER" id="PTHR16565:SF2">
    <property type="entry name" value="APOLIPOPROTEIN C-I"/>
    <property type="match status" value="1"/>
</dbReference>
<dbReference type="Pfam" id="PF04691">
    <property type="entry name" value="ApoC-I"/>
    <property type="match status" value="1"/>
</dbReference>
<protein>
    <recommendedName>
        <fullName>Apolipoprotein C-I</fullName>
        <shortName>Apo-CI</shortName>
        <shortName>ApoC-I</shortName>
    </recommendedName>
    <alternativeName>
        <fullName>Apolipoprotein C1</fullName>
    </alternativeName>
    <component>
        <recommendedName>
            <fullName>Truncated apolipoprotein C-I</fullName>
        </recommendedName>
    </component>
</protein>
<sequence length="87" mass="9673">MRLFLSLPVLVVVLAMVLEGPAPAQAAPEISSTLERIPDKLKEFGNTLENKARAAIESIKQSDLPAKTRNWFSETFNKVEQLKTTFS</sequence>
<proteinExistence type="inferred from homology"/>
<feature type="signal peptide" evidence="4">
    <location>
        <begin position="1"/>
        <end position="26"/>
    </location>
</feature>
<feature type="chain" id="PRO_0000449203" description="Apolipoprotein C-I">
    <location>
        <begin position="27"/>
        <end position="87"/>
    </location>
</feature>
<feature type="chain" id="PRO_0000449204" description="Truncated apolipoprotein C-I" evidence="3">
    <location>
        <begin position="29"/>
        <end position="87"/>
    </location>
</feature>
<evidence type="ECO:0000250" key="1">
    <source>
        <dbReference type="UniProtKB" id="P02654"/>
    </source>
</evidence>
<evidence type="ECO:0000250" key="2">
    <source>
        <dbReference type="UniProtKB" id="P33047"/>
    </source>
</evidence>
<evidence type="ECO:0000250" key="3">
    <source>
        <dbReference type="UniProtKB" id="P86336"/>
    </source>
</evidence>
<evidence type="ECO:0000255" key="4"/>
<evidence type="ECO:0000305" key="5"/>
<comment type="function">
    <text evidence="1 2">Inhibitor of lipoprotein binding to the low density lipoprotein (LDL) receptor, LDL receptor-related protein, and very low density lipoprotein (VLDL) receptor. Associates with high density lipoproteins (HDL) and the triacylglycerol-rich lipoproteins in the plasma and makes up about 10% of the protein of the VLDL and 2% of that of HDL. Appears to interfere directly with fatty acid uptake and is also the major plasma inhibitor of cholesteryl ester transfer protein (CETP). Binds free fatty acids and reduces their intracellular esterification. Modulates the interaction of APOE with beta-migrating VLDL and inhibits binding of beta-VLDL to the LDL receptor-related protein.</text>
</comment>
<comment type="subcellular location">
    <subcellularLocation>
        <location evidence="1">Secreted</location>
    </subcellularLocation>
</comment>
<comment type="similarity">
    <text evidence="5">Belongs to the apolipoprotein C1 family.</text>
</comment>
<keyword id="KW-0445">Lipid transport</keyword>
<keyword id="KW-0964">Secreted</keyword>
<keyword id="KW-0732">Signal</keyword>
<keyword id="KW-0813">Transport</keyword>
<keyword id="KW-0850">VLDL</keyword>
<accession>P0DTT5</accession>
<gene>
    <name type="primary">APOC1</name>
</gene>
<organism>
    <name type="scientific">Zalophus californianus</name>
    <name type="common">California sealion</name>
    <dbReference type="NCBI Taxonomy" id="9704"/>
    <lineage>
        <taxon>Eukaryota</taxon>
        <taxon>Metazoa</taxon>
        <taxon>Chordata</taxon>
        <taxon>Craniata</taxon>
        <taxon>Vertebrata</taxon>
        <taxon>Euteleostomi</taxon>
        <taxon>Mammalia</taxon>
        <taxon>Eutheria</taxon>
        <taxon>Laurasiatheria</taxon>
        <taxon>Carnivora</taxon>
        <taxon>Caniformia</taxon>
        <taxon>Pinnipedia</taxon>
        <taxon>Otariidae</taxon>
        <taxon>Zalophus</taxon>
    </lineage>
</organism>
<reference key="1">
    <citation type="submission" date="2017-11" db="EMBL/GenBank/DDBJ databases">
        <authorList>
            <person name="Johnson J."/>
            <person name="Muren E."/>
            <person name="Swofford R."/>
            <person name="Turner-Maier J."/>
            <person name="Marinescu V.D."/>
            <person name="Genereux D.P."/>
            <person name="Alfoldi J."/>
            <person name="Birren B."/>
            <person name="Karlsson E.K."/>
            <person name="Lindblad-Toh K."/>
        </authorList>
    </citation>
    <scope>NUCLEOTIDE SEQUENCE [LARGE SCALE GENOMIC DNA]</scope>
</reference>
<reference key="2">
    <citation type="unpublished observations" date="2017-11">
        <authorList>
            <person name="Puppione D.L."/>
        </authorList>
    </citation>
    <scope>IDENTIFICATION</scope>
</reference>